<dbReference type="EC" id="5.3.1.16" evidence="1"/>
<dbReference type="EMBL" id="AM933173">
    <property type="protein sequence ID" value="CAR37947.1"/>
    <property type="molecule type" value="Genomic_DNA"/>
</dbReference>
<dbReference type="RefSeq" id="WP_000586403.1">
    <property type="nucleotide sequence ID" value="NC_011274.1"/>
</dbReference>
<dbReference type="SMR" id="B5RBR6"/>
<dbReference type="KEGG" id="seg:SG2106"/>
<dbReference type="HOGENOM" id="CLU_048577_1_2_6"/>
<dbReference type="UniPathway" id="UPA00031">
    <property type="reaction ID" value="UER00009"/>
</dbReference>
<dbReference type="Proteomes" id="UP000008321">
    <property type="component" value="Chromosome"/>
</dbReference>
<dbReference type="GO" id="GO:0005737">
    <property type="term" value="C:cytoplasm"/>
    <property type="evidence" value="ECO:0007669"/>
    <property type="project" value="UniProtKB-SubCell"/>
</dbReference>
<dbReference type="GO" id="GO:0003949">
    <property type="term" value="F:1-(5-phosphoribosyl)-5-[(5-phosphoribosylamino)methylideneamino]imidazole-4-carboxamide isomerase activity"/>
    <property type="evidence" value="ECO:0007669"/>
    <property type="project" value="UniProtKB-UniRule"/>
</dbReference>
<dbReference type="GO" id="GO:0000105">
    <property type="term" value="P:L-histidine biosynthetic process"/>
    <property type="evidence" value="ECO:0007669"/>
    <property type="project" value="UniProtKB-UniRule"/>
</dbReference>
<dbReference type="GO" id="GO:0000162">
    <property type="term" value="P:L-tryptophan biosynthetic process"/>
    <property type="evidence" value="ECO:0007669"/>
    <property type="project" value="TreeGrafter"/>
</dbReference>
<dbReference type="CDD" id="cd04732">
    <property type="entry name" value="HisA"/>
    <property type="match status" value="1"/>
</dbReference>
<dbReference type="FunFam" id="3.20.20.70:FF:000009">
    <property type="entry name" value="1-(5-phosphoribosyl)-5-[(5-phosphoribosylamino)methylideneamino] imidazole-4-carboxamide isomerase"/>
    <property type="match status" value="1"/>
</dbReference>
<dbReference type="Gene3D" id="3.20.20.70">
    <property type="entry name" value="Aldolase class I"/>
    <property type="match status" value="1"/>
</dbReference>
<dbReference type="HAMAP" id="MF_01014">
    <property type="entry name" value="HisA"/>
    <property type="match status" value="1"/>
</dbReference>
<dbReference type="InterPro" id="IPR013785">
    <property type="entry name" value="Aldolase_TIM"/>
</dbReference>
<dbReference type="InterPro" id="IPR006062">
    <property type="entry name" value="His_biosynth"/>
</dbReference>
<dbReference type="InterPro" id="IPR006063">
    <property type="entry name" value="HisA_bact_arch"/>
</dbReference>
<dbReference type="InterPro" id="IPR044524">
    <property type="entry name" value="Isoase_HisA-like"/>
</dbReference>
<dbReference type="InterPro" id="IPR023016">
    <property type="entry name" value="Isoase_HisA-like_bact"/>
</dbReference>
<dbReference type="InterPro" id="IPR011060">
    <property type="entry name" value="RibuloseP-bd_barrel"/>
</dbReference>
<dbReference type="NCBIfam" id="TIGR00007">
    <property type="entry name" value="1-(5-phosphoribosyl)-5-[(5-phosphoribosylamino)methylideneamino]imidazole-4-carboxamide isomerase"/>
    <property type="match status" value="1"/>
</dbReference>
<dbReference type="PANTHER" id="PTHR43090">
    <property type="entry name" value="1-(5-PHOSPHORIBOSYL)-5-[(5-PHOSPHORIBOSYLAMINO)METHYLIDENEAMINO] IMIDAZOLE-4-CARBOXAMIDE ISOMERASE"/>
    <property type="match status" value="1"/>
</dbReference>
<dbReference type="PANTHER" id="PTHR43090:SF2">
    <property type="entry name" value="1-(5-PHOSPHORIBOSYL)-5-[(5-PHOSPHORIBOSYLAMINO)METHYLIDENEAMINO] IMIDAZOLE-4-CARBOXAMIDE ISOMERASE"/>
    <property type="match status" value="1"/>
</dbReference>
<dbReference type="Pfam" id="PF00977">
    <property type="entry name" value="His_biosynth"/>
    <property type="match status" value="1"/>
</dbReference>
<dbReference type="SUPFAM" id="SSF51366">
    <property type="entry name" value="Ribulose-phoshate binding barrel"/>
    <property type="match status" value="1"/>
</dbReference>
<evidence type="ECO:0000255" key="1">
    <source>
        <dbReference type="HAMAP-Rule" id="MF_01014"/>
    </source>
</evidence>
<name>HIS4_SALG2</name>
<protein>
    <recommendedName>
        <fullName evidence="1">1-(5-phosphoribosyl)-5-[(5-phosphoribosylamino)methylideneamino] imidazole-4-carboxamide isomerase</fullName>
        <ecNumber evidence="1">5.3.1.16</ecNumber>
    </recommendedName>
    <alternativeName>
        <fullName evidence="1">Phosphoribosylformimino-5-aminoimidazole carboxamide ribotide isomerase</fullName>
    </alternativeName>
</protein>
<reference key="1">
    <citation type="journal article" date="2008" name="Genome Res.">
        <title>Comparative genome analysis of Salmonella enteritidis PT4 and Salmonella gallinarum 287/91 provides insights into evolutionary and host adaptation pathways.</title>
        <authorList>
            <person name="Thomson N.R."/>
            <person name="Clayton D.J."/>
            <person name="Windhorst D."/>
            <person name="Vernikos G."/>
            <person name="Davidson S."/>
            <person name="Churcher C."/>
            <person name="Quail M.A."/>
            <person name="Stevens M."/>
            <person name="Jones M.A."/>
            <person name="Watson M."/>
            <person name="Barron A."/>
            <person name="Layton A."/>
            <person name="Pickard D."/>
            <person name="Kingsley R.A."/>
            <person name="Bignell A."/>
            <person name="Clark L."/>
            <person name="Harris B."/>
            <person name="Ormond D."/>
            <person name="Abdellah Z."/>
            <person name="Brooks K."/>
            <person name="Cherevach I."/>
            <person name="Chillingworth T."/>
            <person name="Woodward J."/>
            <person name="Norberczak H."/>
            <person name="Lord A."/>
            <person name="Arrowsmith C."/>
            <person name="Jagels K."/>
            <person name="Moule S."/>
            <person name="Mungall K."/>
            <person name="Saunders M."/>
            <person name="Whitehead S."/>
            <person name="Chabalgoity J.A."/>
            <person name="Maskell D."/>
            <person name="Humphreys T."/>
            <person name="Roberts M."/>
            <person name="Barrow P.A."/>
            <person name="Dougan G."/>
            <person name="Parkhill J."/>
        </authorList>
    </citation>
    <scope>NUCLEOTIDE SEQUENCE [LARGE SCALE GENOMIC DNA]</scope>
    <source>
        <strain>287/91 / NCTC 13346</strain>
    </source>
</reference>
<organism>
    <name type="scientific">Salmonella gallinarum (strain 287/91 / NCTC 13346)</name>
    <dbReference type="NCBI Taxonomy" id="550538"/>
    <lineage>
        <taxon>Bacteria</taxon>
        <taxon>Pseudomonadati</taxon>
        <taxon>Pseudomonadota</taxon>
        <taxon>Gammaproteobacteria</taxon>
        <taxon>Enterobacterales</taxon>
        <taxon>Enterobacteriaceae</taxon>
        <taxon>Salmonella</taxon>
    </lineage>
</organism>
<keyword id="KW-0028">Amino-acid biosynthesis</keyword>
<keyword id="KW-0963">Cytoplasm</keyword>
<keyword id="KW-0368">Histidine biosynthesis</keyword>
<keyword id="KW-0413">Isomerase</keyword>
<feature type="chain" id="PRO_1000190552" description="1-(5-phosphoribosyl)-5-[(5-phosphoribosylamino)methylideneamino] imidazole-4-carboxamide isomerase">
    <location>
        <begin position="1"/>
        <end position="245"/>
    </location>
</feature>
<feature type="active site" description="Proton acceptor" evidence="1">
    <location>
        <position position="7"/>
    </location>
</feature>
<feature type="active site" description="Proton donor" evidence="1">
    <location>
        <position position="129"/>
    </location>
</feature>
<gene>
    <name evidence="1" type="primary">hisA</name>
    <name type="ordered locus">SG2106</name>
</gene>
<proteinExistence type="inferred from homology"/>
<sequence>MIIPALDLIDGTVVRLHQGDYARQRDYGNDPLPRLQDYAAQGAGVLHLVDLTGAKDPAKRQIPLIKTLVAGVNVPVQVGGGVRTEEDVAALLKAGVARVVIGSTAVKSPDVVKGWFERFGAQALVLALDVRIDEHGNKQVAVSGWQENSGVSLEQLVETYLPVGLKHVLCTDISRDGTLAGSNVSLYEEICARYPQIAFQSSGGIGDIDDIAALRGTGVRGVIVGRALLEGKFTVKEAIQCWQNV</sequence>
<accession>B5RBR6</accession>
<comment type="catalytic activity">
    <reaction evidence="1">
        <text>1-(5-phospho-beta-D-ribosyl)-5-[(5-phospho-beta-D-ribosylamino)methylideneamino]imidazole-4-carboxamide = 5-[(5-phospho-1-deoxy-D-ribulos-1-ylimino)methylamino]-1-(5-phospho-beta-D-ribosyl)imidazole-4-carboxamide</text>
        <dbReference type="Rhea" id="RHEA:15469"/>
        <dbReference type="ChEBI" id="CHEBI:58435"/>
        <dbReference type="ChEBI" id="CHEBI:58525"/>
        <dbReference type="EC" id="5.3.1.16"/>
    </reaction>
</comment>
<comment type="pathway">
    <text evidence="1">Amino-acid biosynthesis; L-histidine biosynthesis; L-histidine from 5-phospho-alpha-D-ribose 1-diphosphate: step 4/9.</text>
</comment>
<comment type="subcellular location">
    <subcellularLocation>
        <location evidence="1">Cytoplasm</location>
    </subcellularLocation>
</comment>
<comment type="similarity">
    <text evidence="1">Belongs to the HisA/HisF family.</text>
</comment>